<gene>
    <name evidence="1" type="primary">darP</name>
    <name type="ordered locus">EcE24377A_4804</name>
</gene>
<accession>A7ZVB3</accession>
<sequence length="183" mass="21359">MTKQPEDWLDDVPGDDIEDEDDEIIWVSKSEIKRDAEELKRLGAEIVDLGKNALDKIPLDADLRAAIELAQRIKMEGRRRQLQLIGKMLRQRDVEPIRQALDKLKNRHNQQVVLFHKLENLRDRLIDQGDDAIAEVLNLWPDADRQQLRTLIRNAKKEKEGNKPPKSARQIFQYLRELAENEG</sequence>
<feature type="chain" id="PRO_1000062218" description="Dual-action ribosomal maturation protein DarP">
    <location>
        <begin position="1"/>
        <end position="183"/>
    </location>
</feature>
<dbReference type="EMBL" id="CP000800">
    <property type="protein sequence ID" value="ABV16646.1"/>
    <property type="molecule type" value="Genomic_DNA"/>
</dbReference>
<dbReference type="SMR" id="A7ZVB3"/>
<dbReference type="KEGG" id="ecw:EcE24377A_4804"/>
<dbReference type="HOGENOM" id="CLU_106757_2_0_6"/>
<dbReference type="Proteomes" id="UP000001122">
    <property type="component" value="Chromosome"/>
</dbReference>
<dbReference type="GO" id="GO:0005829">
    <property type="term" value="C:cytosol"/>
    <property type="evidence" value="ECO:0007669"/>
    <property type="project" value="TreeGrafter"/>
</dbReference>
<dbReference type="GO" id="GO:0043022">
    <property type="term" value="F:ribosome binding"/>
    <property type="evidence" value="ECO:0007669"/>
    <property type="project" value="UniProtKB-UniRule"/>
</dbReference>
<dbReference type="GO" id="GO:0019843">
    <property type="term" value="F:rRNA binding"/>
    <property type="evidence" value="ECO:0007669"/>
    <property type="project" value="UniProtKB-UniRule"/>
</dbReference>
<dbReference type="GO" id="GO:1902626">
    <property type="term" value="P:assembly of large subunit precursor of preribosome"/>
    <property type="evidence" value="ECO:0007669"/>
    <property type="project" value="UniProtKB-UniRule"/>
</dbReference>
<dbReference type="CDD" id="cd16331">
    <property type="entry name" value="YjgA-like"/>
    <property type="match status" value="1"/>
</dbReference>
<dbReference type="FunFam" id="1.10.60.30:FF:000001">
    <property type="entry name" value="UPF0307 protein YjgA"/>
    <property type="match status" value="1"/>
</dbReference>
<dbReference type="FunFam" id="1.10.60.30:FF:000002">
    <property type="entry name" value="UPF0307 protein YjgA"/>
    <property type="match status" value="1"/>
</dbReference>
<dbReference type="Gene3D" id="1.10.60.30">
    <property type="entry name" value="PSPTO4464-like domains"/>
    <property type="match status" value="2"/>
</dbReference>
<dbReference type="HAMAP" id="MF_00765">
    <property type="entry name" value="DarP"/>
    <property type="match status" value="1"/>
</dbReference>
<dbReference type="InterPro" id="IPR006839">
    <property type="entry name" value="DarP"/>
</dbReference>
<dbReference type="InterPro" id="IPR023153">
    <property type="entry name" value="DarP_sf"/>
</dbReference>
<dbReference type="NCBIfam" id="NF003593">
    <property type="entry name" value="PRK05255.1-1"/>
    <property type="match status" value="1"/>
</dbReference>
<dbReference type="PANTHER" id="PTHR38101">
    <property type="entry name" value="UPF0307 PROTEIN YJGA"/>
    <property type="match status" value="1"/>
</dbReference>
<dbReference type="PANTHER" id="PTHR38101:SF1">
    <property type="entry name" value="UPF0307 PROTEIN YJGA"/>
    <property type="match status" value="1"/>
</dbReference>
<dbReference type="Pfam" id="PF04751">
    <property type="entry name" value="DarP"/>
    <property type="match status" value="1"/>
</dbReference>
<dbReference type="PIRSF" id="PIRSF016183">
    <property type="entry name" value="UCP016183"/>
    <property type="match status" value="1"/>
</dbReference>
<dbReference type="SUPFAM" id="SSF158710">
    <property type="entry name" value="PSPTO4464-like"/>
    <property type="match status" value="1"/>
</dbReference>
<organism>
    <name type="scientific">Escherichia coli O139:H28 (strain E24377A / ETEC)</name>
    <dbReference type="NCBI Taxonomy" id="331111"/>
    <lineage>
        <taxon>Bacteria</taxon>
        <taxon>Pseudomonadati</taxon>
        <taxon>Pseudomonadota</taxon>
        <taxon>Gammaproteobacteria</taxon>
        <taxon>Enterobacterales</taxon>
        <taxon>Enterobacteriaceae</taxon>
        <taxon>Escherichia</taxon>
    </lineage>
</organism>
<proteinExistence type="inferred from homology"/>
<protein>
    <recommendedName>
        <fullName evidence="1">Dual-action ribosomal maturation protein DarP</fullName>
    </recommendedName>
    <alternativeName>
        <fullName evidence="1">Large ribosomal subunit assembly factor DarP</fullName>
    </alternativeName>
</protein>
<keyword id="KW-0963">Cytoplasm</keyword>
<keyword id="KW-1185">Reference proteome</keyword>
<keyword id="KW-0690">Ribosome biogenesis</keyword>
<keyword id="KW-0694">RNA-binding</keyword>
<keyword id="KW-0699">rRNA-binding</keyword>
<comment type="function">
    <text evidence="1">Member of a network of 50S ribosomal subunit biogenesis factors which assembles along the 30S-50S interface, preventing incorrect 23S rRNA structures from forming. Promotes peptidyl transferase center (PTC) maturation.</text>
</comment>
<comment type="subcellular location">
    <subcellularLocation>
        <location evidence="1">Cytoplasm</location>
    </subcellularLocation>
    <text evidence="1">Associates with late stage pre-50S ribosomal subunits.</text>
</comment>
<comment type="similarity">
    <text evidence="1">Belongs to the DarP family.</text>
</comment>
<reference key="1">
    <citation type="journal article" date="2008" name="J. Bacteriol.">
        <title>The pangenome structure of Escherichia coli: comparative genomic analysis of E. coli commensal and pathogenic isolates.</title>
        <authorList>
            <person name="Rasko D.A."/>
            <person name="Rosovitz M.J."/>
            <person name="Myers G.S.A."/>
            <person name="Mongodin E.F."/>
            <person name="Fricke W.F."/>
            <person name="Gajer P."/>
            <person name="Crabtree J."/>
            <person name="Sebaihia M."/>
            <person name="Thomson N.R."/>
            <person name="Chaudhuri R."/>
            <person name="Henderson I.R."/>
            <person name="Sperandio V."/>
            <person name="Ravel J."/>
        </authorList>
    </citation>
    <scope>NUCLEOTIDE SEQUENCE [LARGE SCALE GENOMIC DNA]</scope>
    <source>
        <strain>E24377A / ETEC</strain>
    </source>
</reference>
<evidence type="ECO:0000255" key="1">
    <source>
        <dbReference type="HAMAP-Rule" id="MF_00765"/>
    </source>
</evidence>
<name>DARP_ECO24</name>